<accession>Q5ZJR8</accession>
<organism>
    <name type="scientific">Gallus gallus</name>
    <name type="common">Chicken</name>
    <dbReference type="NCBI Taxonomy" id="9031"/>
    <lineage>
        <taxon>Eukaryota</taxon>
        <taxon>Metazoa</taxon>
        <taxon>Chordata</taxon>
        <taxon>Craniata</taxon>
        <taxon>Vertebrata</taxon>
        <taxon>Euteleostomi</taxon>
        <taxon>Archelosauria</taxon>
        <taxon>Archosauria</taxon>
        <taxon>Dinosauria</taxon>
        <taxon>Saurischia</taxon>
        <taxon>Theropoda</taxon>
        <taxon>Coelurosauria</taxon>
        <taxon>Aves</taxon>
        <taxon>Neognathae</taxon>
        <taxon>Galloanserae</taxon>
        <taxon>Galliformes</taxon>
        <taxon>Phasianidae</taxon>
        <taxon>Phasianinae</taxon>
        <taxon>Gallus</taxon>
    </lineage>
</organism>
<keyword id="KW-0256">Endoplasmic reticulum</keyword>
<keyword id="KW-0275">Fatty acid biosynthesis</keyword>
<keyword id="KW-0276">Fatty acid metabolism</keyword>
<keyword id="KW-0325">Glycoprotein</keyword>
<keyword id="KW-0444">Lipid biosynthesis</keyword>
<keyword id="KW-0443">Lipid metabolism</keyword>
<keyword id="KW-0472">Membrane</keyword>
<keyword id="KW-1185">Reference proteome</keyword>
<keyword id="KW-0808">Transferase</keyword>
<keyword id="KW-0812">Transmembrane</keyword>
<keyword id="KW-1133">Transmembrane helix</keyword>
<protein>
    <recommendedName>
        <fullName evidence="3">Very long chain fatty acid elongase 6</fullName>
        <ecNumber evidence="2 3">2.3.1.199</ecNumber>
    </recommendedName>
    <alternativeName>
        <fullName evidence="3">3-keto acyl-CoA synthase ELOVL6</fullName>
    </alternativeName>
    <alternativeName>
        <fullName evidence="3">ELOVL fatty acid elongase 6</fullName>
        <shortName evidence="3">ELOVL FA elongase 6</shortName>
    </alternativeName>
    <alternativeName>
        <fullName evidence="3">Elongation of very long chain fatty acids protein 6</fullName>
    </alternativeName>
    <alternativeName>
        <fullName evidence="3">Very long chain 3-ketoacyl-CoA synthase 6</fullName>
    </alternativeName>
    <alternativeName>
        <fullName evidence="3">Very long chain 3-oxoacyl-CoA synthase 6</fullName>
    </alternativeName>
</protein>
<proteinExistence type="evidence at transcript level"/>
<sequence length="265" mass="31268">MNMSVLTLQEYEFEKQFNEHEAIQWMQENWKKSFLFSALYAAFIFGGRHLMNKRAKFELRKPLVLWSLSLAVFSIFGAVRTAPYMLYILMTKGLKQSVCDQSFYIGPVSKFWAYAFVLSKAPELGDTIFIILRKQKLIFLHWYHHITVLLYSWYSYKDMVAGGGWFMTMNYGVHAVMYSYYALRAAGFRVSRKFAMFITLSQITQMLVGCVINYLVFSWMQHGQCHSHVQNIIWSSLMYLSYFVLFCHFFFEAYIGKTTKARKVD</sequence>
<name>ELOV6_CHICK</name>
<evidence type="ECO:0000250" key="1">
    <source>
        <dbReference type="UniProtKB" id="Q920L5"/>
    </source>
</evidence>
<evidence type="ECO:0000250" key="2">
    <source>
        <dbReference type="UniProtKB" id="Q9H5J4"/>
    </source>
</evidence>
<evidence type="ECO:0000255" key="3">
    <source>
        <dbReference type="HAMAP-Rule" id="MF_03206"/>
    </source>
</evidence>
<gene>
    <name evidence="3" type="primary">ELOVL6</name>
    <name type="ORF">RCJMB04_16d24</name>
</gene>
<feature type="chain" id="PRO_0000282849" description="Very long chain fatty acid elongase 6">
    <location>
        <begin position="1"/>
        <end position="265"/>
    </location>
</feature>
<feature type="transmembrane region" description="Helical" evidence="3">
    <location>
        <begin position="34"/>
        <end position="51"/>
    </location>
</feature>
<feature type="transmembrane region" description="Helical" evidence="3">
    <location>
        <begin position="70"/>
        <end position="90"/>
    </location>
</feature>
<feature type="transmembrane region" description="Helical" evidence="3">
    <location>
        <begin position="111"/>
        <end position="131"/>
    </location>
</feature>
<feature type="transmembrane region" description="Helical" evidence="3">
    <location>
        <begin position="137"/>
        <end position="156"/>
    </location>
</feature>
<feature type="transmembrane region" description="Helical" evidence="3">
    <location>
        <begin position="159"/>
        <end position="179"/>
    </location>
</feature>
<feature type="transmembrane region" description="Helical" evidence="3">
    <location>
        <begin position="197"/>
        <end position="217"/>
    </location>
</feature>
<feature type="transmembrane region" description="Helical" evidence="3">
    <location>
        <begin position="232"/>
        <end position="252"/>
    </location>
</feature>
<feature type="glycosylation site" description="N-linked (GlcNAc...) asparagine" evidence="3">
    <location>
        <position position="2"/>
    </location>
</feature>
<comment type="function">
    <text evidence="3">Catalyzes the first and rate-limiting reaction of the four reactions that constitute the long-chain fatty acids elongation cycle. This endoplasmic reticulum-bound enzymatic process allows the addition of 2 carbons to the chain of long- and very long-chain fatty acids (VLCFAs) per cycle. Condensing enzyme that elongates fatty acids with 12, 14 and 16 carbons with higher activity toward C16:0 acyl-CoAs. Catalyzes the synthesis of unsaturated C16 long chain fatty acids and, to a lesser extent, C18:0 and those with low desaturation degree. May participate in the production of saturated and monounsaturated VLCFAs of different chain lengths that are involved in multiple biological processes as precursors of membrane lipids and lipid mediators.</text>
</comment>
<comment type="catalytic activity">
    <reaction evidence="3">
        <text>a very-long-chain acyl-CoA + malonyl-CoA + H(+) = a very-long-chain 3-oxoacyl-CoA + CO2 + CoA</text>
        <dbReference type="Rhea" id="RHEA:32727"/>
        <dbReference type="ChEBI" id="CHEBI:15378"/>
        <dbReference type="ChEBI" id="CHEBI:16526"/>
        <dbReference type="ChEBI" id="CHEBI:57287"/>
        <dbReference type="ChEBI" id="CHEBI:57384"/>
        <dbReference type="ChEBI" id="CHEBI:90725"/>
        <dbReference type="ChEBI" id="CHEBI:90736"/>
        <dbReference type="EC" id="2.3.1.199"/>
    </reaction>
    <physiologicalReaction direction="left-to-right" evidence="2">
        <dbReference type="Rhea" id="RHEA:32728"/>
    </physiologicalReaction>
</comment>
<comment type="catalytic activity">
    <reaction evidence="2">
        <text>hexadecanoyl-CoA + malonyl-CoA + H(+) = 3-oxooctadecanoyl-CoA + CO2 + CoA</text>
        <dbReference type="Rhea" id="RHEA:35315"/>
        <dbReference type="ChEBI" id="CHEBI:15378"/>
        <dbReference type="ChEBI" id="CHEBI:16526"/>
        <dbReference type="ChEBI" id="CHEBI:57287"/>
        <dbReference type="ChEBI" id="CHEBI:57379"/>
        <dbReference type="ChEBI" id="CHEBI:57384"/>
        <dbReference type="ChEBI" id="CHEBI:71407"/>
    </reaction>
    <physiologicalReaction direction="left-to-right" evidence="2">
        <dbReference type="Rhea" id="RHEA:35316"/>
    </physiologicalReaction>
</comment>
<comment type="catalytic activity">
    <reaction evidence="1">
        <text>(9Z)-hexadecenoyl-CoA + malonyl-CoA + H(+) = 3-oxo-(11Z)-octadecenoyl-CoA + CO2 + CoA</text>
        <dbReference type="Rhea" id="RHEA:39675"/>
        <dbReference type="ChEBI" id="CHEBI:15378"/>
        <dbReference type="ChEBI" id="CHEBI:16526"/>
        <dbReference type="ChEBI" id="CHEBI:57287"/>
        <dbReference type="ChEBI" id="CHEBI:57384"/>
        <dbReference type="ChEBI" id="CHEBI:61540"/>
        <dbReference type="ChEBI" id="CHEBI:76555"/>
    </reaction>
    <physiologicalReaction direction="left-to-right" evidence="2">
        <dbReference type="Rhea" id="RHEA:39676"/>
    </physiologicalReaction>
</comment>
<comment type="catalytic activity">
    <reaction evidence="1">
        <text>dodecanoyl-CoA + malonyl-CoA + H(+) = 3-oxotetradecanoyl-CoA + CO2 + CoA</text>
        <dbReference type="Rhea" id="RHEA:60140"/>
        <dbReference type="ChEBI" id="CHEBI:15378"/>
        <dbReference type="ChEBI" id="CHEBI:16526"/>
        <dbReference type="ChEBI" id="CHEBI:57287"/>
        <dbReference type="ChEBI" id="CHEBI:57375"/>
        <dbReference type="ChEBI" id="CHEBI:57384"/>
        <dbReference type="ChEBI" id="CHEBI:62543"/>
    </reaction>
    <physiologicalReaction direction="left-to-right" evidence="1">
        <dbReference type="Rhea" id="RHEA:60141"/>
    </physiologicalReaction>
</comment>
<comment type="catalytic activity">
    <reaction evidence="2">
        <text>tetradecanoyl-CoA + malonyl-CoA + H(+) = 3-oxohexadecanoyl-CoA + CO2 + CoA</text>
        <dbReference type="Rhea" id="RHEA:39167"/>
        <dbReference type="ChEBI" id="CHEBI:15378"/>
        <dbReference type="ChEBI" id="CHEBI:16526"/>
        <dbReference type="ChEBI" id="CHEBI:57287"/>
        <dbReference type="ChEBI" id="CHEBI:57349"/>
        <dbReference type="ChEBI" id="CHEBI:57384"/>
        <dbReference type="ChEBI" id="CHEBI:57385"/>
    </reaction>
    <physiologicalReaction direction="left-to-right" evidence="2">
        <dbReference type="Rhea" id="RHEA:39168"/>
    </physiologicalReaction>
</comment>
<comment type="catalytic activity">
    <reaction evidence="2">
        <text>(9Z)-octadecenoyl-CoA + malonyl-CoA + H(+) = 3-oxo-(11Z)-eicosenoyl-CoA + CO2 + CoA</text>
        <dbReference type="Rhea" id="RHEA:36511"/>
        <dbReference type="ChEBI" id="CHEBI:15378"/>
        <dbReference type="ChEBI" id="CHEBI:16526"/>
        <dbReference type="ChEBI" id="CHEBI:57287"/>
        <dbReference type="ChEBI" id="CHEBI:57384"/>
        <dbReference type="ChEBI" id="CHEBI:57387"/>
        <dbReference type="ChEBI" id="CHEBI:74011"/>
    </reaction>
    <physiologicalReaction direction="left-to-right" evidence="2">
        <dbReference type="Rhea" id="RHEA:36512"/>
    </physiologicalReaction>
</comment>
<comment type="catalytic activity">
    <reaction evidence="2">
        <text>(9Z,12Z)-octadecadienoyl-CoA + malonyl-CoA + H(+) = (11Z,14Z)-3-oxoicosa-11,14-dienoyl-CoA + CO2 + CoA</text>
        <dbReference type="Rhea" id="RHEA:36503"/>
        <dbReference type="ChEBI" id="CHEBI:15378"/>
        <dbReference type="ChEBI" id="CHEBI:16526"/>
        <dbReference type="ChEBI" id="CHEBI:57287"/>
        <dbReference type="ChEBI" id="CHEBI:57383"/>
        <dbReference type="ChEBI" id="CHEBI:57384"/>
        <dbReference type="ChEBI" id="CHEBI:74012"/>
    </reaction>
    <physiologicalReaction direction="left-to-right" evidence="2">
        <dbReference type="Rhea" id="RHEA:36504"/>
    </physiologicalReaction>
</comment>
<comment type="catalytic activity">
    <reaction evidence="2">
        <text>(9Z,12Z,15Z)-octadecatrienoyl-CoA + malonyl-CoA + H(+) = (11Z,14Z,17Z)-3-oxoeicosatrienoyl-CoA + CO2 + CoA</text>
        <dbReference type="Rhea" id="RHEA:36523"/>
        <dbReference type="ChEBI" id="CHEBI:15378"/>
        <dbReference type="ChEBI" id="CHEBI:16526"/>
        <dbReference type="ChEBI" id="CHEBI:57287"/>
        <dbReference type="ChEBI" id="CHEBI:57384"/>
        <dbReference type="ChEBI" id="CHEBI:74034"/>
        <dbReference type="ChEBI" id="CHEBI:74054"/>
    </reaction>
    <physiologicalReaction direction="left-to-right" evidence="2">
        <dbReference type="Rhea" id="RHEA:36524"/>
    </physiologicalReaction>
</comment>
<comment type="activity regulation">
    <text evidence="2">The reaction is stimulated by the presence of HSD17B12, the enzyme catalyzing the second step of the elongation cycle.</text>
</comment>
<comment type="pathway">
    <text evidence="3">Lipid metabolism; fatty acid biosynthesis.</text>
</comment>
<comment type="subcellular location">
    <subcellularLocation>
        <location evidence="3">Endoplasmic reticulum membrane</location>
        <topology evidence="3">Multi-pass membrane protein</topology>
    </subcellularLocation>
</comment>
<comment type="PTM">
    <text evidence="3">N-Glycosylated.</text>
</comment>
<comment type="similarity">
    <text evidence="3">Belongs to the ELO family. ELOVL6 subfamily.</text>
</comment>
<reference key="1">
    <citation type="journal article" date="2005" name="Genome Biol.">
        <title>Full-length cDNAs from chicken bursal lymphocytes to facilitate gene function analysis.</title>
        <authorList>
            <person name="Caldwell R.B."/>
            <person name="Kierzek A.M."/>
            <person name="Arakawa H."/>
            <person name="Bezzubov Y."/>
            <person name="Zaim J."/>
            <person name="Fiedler P."/>
            <person name="Kutter S."/>
            <person name="Blagodatski A."/>
            <person name="Kostovska D."/>
            <person name="Koter M."/>
            <person name="Plachy J."/>
            <person name="Carninci P."/>
            <person name="Hayashizaki Y."/>
            <person name="Buerstedde J.-M."/>
        </authorList>
    </citation>
    <scope>NUCLEOTIDE SEQUENCE [LARGE SCALE MRNA]</scope>
    <source>
        <strain>CB</strain>
        <tissue>Bursa of Fabricius</tissue>
    </source>
</reference>
<dbReference type="EC" id="2.3.1.199" evidence="2 3"/>
<dbReference type="EMBL" id="AJ720366">
    <property type="protein sequence ID" value="CAG32025.1"/>
    <property type="molecule type" value="mRNA"/>
</dbReference>
<dbReference type="RefSeq" id="NP_001026710.1">
    <property type="nucleotide sequence ID" value="NM_001031539.2"/>
</dbReference>
<dbReference type="SMR" id="Q5ZJR8"/>
<dbReference type="FunCoup" id="Q5ZJR8">
    <property type="interactions" value="655"/>
</dbReference>
<dbReference type="STRING" id="9031.ENSGALP00000068815"/>
<dbReference type="GlyCosmos" id="Q5ZJR8">
    <property type="glycosylation" value="1 site, No reported glycans"/>
</dbReference>
<dbReference type="GlyGen" id="Q5ZJR8">
    <property type="glycosylation" value="1 site"/>
</dbReference>
<dbReference type="Ensembl" id="ENSGALT00000139647">
    <property type="protein sequence ID" value="ENSGALP00000095177"/>
    <property type="gene ID" value="ENSGALG00000054319"/>
</dbReference>
<dbReference type="Ensembl" id="ENSGALT00010008775.1">
    <property type="protein sequence ID" value="ENSGALP00010005129.1"/>
    <property type="gene ID" value="ENSGALG00010003790.1"/>
</dbReference>
<dbReference type="GeneID" id="428772"/>
<dbReference type="KEGG" id="gga:428772"/>
<dbReference type="CTD" id="79071"/>
<dbReference type="VEuPathDB" id="HostDB:geneid_428772"/>
<dbReference type="GeneTree" id="ENSGT01050000244965"/>
<dbReference type="HOGENOM" id="CLU_048483_1_3_1"/>
<dbReference type="InParanoid" id="Q5ZJR8"/>
<dbReference type="OrthoDB" id="10259681at2759"/>
<dbReference type="PhylomeDB" id="Q5ZJR8"/>
<dbReference type="UniPathway" id="UPA00094"/>
<dbReference type="PRO" id="PR:Q5ZJR8"/>
<dbReference type="Proteomes" id="UP000000539">
    <property type="component" value="Chromosome 4"/>
</dbReference>
<dbReference type="GO" id="GO:0005783">
    <property type="term" value="C:endoplasmic reticulum"/>
    <property type="evidence" value="ECO:0000250"/>
    <property type="project" value="UniProtKB"/>
</dbReference>
<dbReference type="GO" id="GO:0005789">
    <property type="term" value="C:endoplasmic reticulum membrane"/>
    <property type="evidence" value="ECO:0007669"/>
    <property type="project" value="UniProtKB-SubCell"/>
</dbReference>
<dbReference type="GO" id="GO:0009922">
    <property type="term" value="F:fatty acid elongase activity"/>
    <property type="evidence" value="ECO:0007669"/>
    <property type="project" value="UniProtKB-UniRule"/>
</dbReference>
<dbReference type="GO" id="GO:0034625">
    <property type="term" value="P:fatty acid elongation, monounsaturated fatty acid"/>
    <property type="evidence" value="ECO:0007669"/>
    <property type="project" value="UniProtKB-UniRule"/>
</dbReference>
<dbReference type="GO" id="GO:0019367">
    <property type="term" value="P:fatty acid elongation, saturated fatty acid"/>
    <property type="evidence" value="ECO:0000250"/>
    <property type="project" value="UniProtKB"/>
</dbReference>
<dbReference type="GO" id="GO:0042759">
    <property type="term" value="P:long-chain fatty acid biosynthetic process"/>
    <property type="evidence" value="ECO:0000250"/>
    <property type="project" value="UniProtKB"/>
</dbReference>
<dbReference type="GO" id="GO:0035338">
    <property type="term" value="P:long-chain fatty-acyl-CoA biosynthetic process"/>
    <property type="evidence" value="ECO:0007669"/>
    <property type="project" value="UniProtKB-UniRule"/>
</dbReference>
<dbReference type="GO" id="GO:0006636">
    <property type="term" value="P:unsaturated fatty acid biosynthetic process"/>
    <property type="evidence" value="ECO:0007669"/>
    <property type="project" value="UniProtKB-UniRule"/>
</dbReference>
<dbReference type="GO" id="GO:0042761">
    <property type="term" value="P:very long-chain fatty acid biosynthetic process"/>
    <property type="evidence" value="ECO:0007669"/>
    <property type="project" value="InterPro"/>
</dbReference>
<dbReference type="HAMAP" id="MF_03206">
    <property type="entry name" value="VLCF_elongase_6"/>
    <property type="match status" value="1"/>
</dbReference>
<dbReference type="InterPro" id="IPR030457">
    <property type="entry name" value="ELO_CS"/>
</dbReference>
<dbReference type="InterPro" id="IPR002076">
    <property type="entry name" value="ELO_fam"/>
</dbReference>
<dbReference type="InterPro" id="IPR033675">
    <property type="entry name" value="ELOVL6"/>
</dbReference>
<dbReference type="PANTHER" id="PTHR11157:SF125">
    <property type="entry name" value="ELONGATION OF VERY LONG CHAIN FATTY ACIDS PROTEIN 6"/>
    <property type="match status" value="1"/>
</dbReference>
<dbReference type="PANTHER" id="PTHR11157">
    <property type="entry name" value="FATTY ACID ACYL TRANSFERASE-RELATED"/>
    <property type="match status" value="1"/>
</dbReference>
<dbReference type="Pfam" id="PF01151">
    <property type="entry name" value="ELO"/>
    <property type="match status" value="1"/>
</dbReference>
<dbReference type="PROSITE" id="PS01188">
    <property type="entry name" value="ELO"/>
    <property type="match status" value="1"/>
</dbReference>